<protein>
    <recommendedName>
        <fullName>Probable CDP-diacylglycerol pyrophosphatase</fullName>
        <ecNumber>3.6.1.26</ecNumber>
    </recommendedName>
    <alternativeName>
        <fullName>CDP-diacylglycerol phosphatidylhydrolase</fullName>
    </alternativeName>
    <alternativeName>
        <fullName>CDP-diglyceride hydrolase</fullName>
    </alternativeName>
</protein>
<proteinExistence type="inferred from homology"/>
<evidence type="ECO:0000255" key="1"/>
<evidence type="ECO:0000305" key="2"/>
<reference key="1">
    <citation type="journal article" date="2001" name="Nature">
        <title>Massive gene decay in the leprosy bacillus.</title>
        <authorList>
            <person name="Cole S.T."/>
            <person name="Eiglmeier K."/>
            <person name="Parkhill J."/>
            <person name="James K.D."/>
            <person name="Thomson N.R."/>
            <person name="Wheeler P.R."/>
            <person name="Honore N."/>
            <person name="Garnier T."/>
            <person name="Churcher C.M."/>
            <person name="Harris D.E."/>
            <person name="Mungall K.L."/>
            <person name="Basham D."/>
            <person name="Brown D."/>
            <person name="Chillingworth T."/>
            <person name="Connor R."/>
            <person name="Davies R.M."/>
            <person name="Devlin K."/>
            <person name="Duthoy S."/>
            <person name="Feltwell T."/>
            <person name="Fraser A."/>
            <person name="Hamlin N."/>
            <person name="Holroyd S."/>
            <person name="Hornsby T."/>
            <person name="Jagels K."/>
            <person name="Lacroix C."/>
            <person name="Maclean J."/>
            <person name="Moule S."/>
            <person name="Murphy L.D."/>
            <person name="Oliver K."/>
            <person name="Quail M.A."/>
            <person name="Rajandream M.A."/>
            <person name="Rutherford K.M."/>
            <person name="Rutter S."/>
            <person name="Seeger K."/>
            <person name="Simon S."/>
            <person name="Simmonds M."/>
            <person name="Skelton J."/>
            <person name="Squares R."/>
            <person name="Squares S."/>
            <person name="Stevens K."/>
            <person name="Taylor K."/>
            <person name="Whitehead S."/>
            <person name="Woodward J.R."/>
            <person name="Barrell B.G."/>
        </authorList>
    </citation>
    <scope>NUCLEOTIDE SEQUENCE [LARGE SCALE GENOMIC DNA]</scope>
    <source>
        <strain>TN</strain>
    </source>
</reference>
<sequence>MRRSIILVSVSVAIAMLTGASIAEAEPMPPNNPSAATRDALWKIVHDRCELGYQHTGAYAPCTLVDEQAGTALFKANYDPNQYLLLPLARVTGIEDPALQELASPNYLYNAWAARGFVSSRLNNSLPEPDIFLAINPKNARTQDQLHIHISCVSPTTAEILKQVNWAEYVGWKPLPVTLQDHTYQALAVNRSTFESKSLFRDIQTKVTADGNTMDHASVAVANIAPDQFLLLVAEGTEDQAIAAEELQDHNCSIAKRLTGQLDMETRR</sequence>
<keyword id="KW-1003">Cell membrane</keyword>
<keyword id="KW-0378">Hydrolase</keyword>
<keyword id="KW-0444">Lipid biosynthesis</keyword>
<keyword id="KW-0443">Lipid metabolism</keyword>
<keyword id="KW-0472">Membrane</keyword>
<keyword id="KW-0594">Phospholipid biosynthesis</keyword>
<keyword id="KW-1208">Phospholipid metabolism</keyword>
<keyword id="KW-1185">Reference proteome</keyword>
<keyword id="KW-0812">Transmembrane</keyword>
<keyword id="KW-1133">Transmembrane helix</keyword>
<accession>Q9CC08</accession>
<gene>
    <name type="primary">cdh</name>
    <name type="ordered locus">ML1417</name>
</gene>
<feature type="chain" id="PRO_0000198579" description="Probable CDP-diacylglycerol pyrophosphatase">
    <location>
        <begin position="1"/>
        <end position="268"/>
    </location>
</feature>
<feature type="transmembrane region" description="Helical" evidence="1">
    <location>
        <begin position="5"/>
        <end position="23"/>
    </location>
</feature>
<comment type="catalytic activity">
    <reaction>
        <text>a CDP-1,2-diacyl-sn-glycerol + H2O = a 1,2-diacyl-sn-glycero-3-phosphate + CMP + 2 H(+)</text>
        <dbReference type="Rhea" id="RHEA:15221"/>
        <dbReference type="ChEBI" id="CHEBI:15377"/>
        <dbReference type="ChEBI" id="CHEBI:15378"/>
        <dbReference type="ChEBI" id="CHEBI:58332"/>
        <dbReference type="ChEBI" id="CHEBI:58608"/>
        <dbReference type="ChEBI" id="CHEBI:60377"/>
        <dbReference type="EC" id="3.6.1.26"/>
    </reaction>
</comment>
<comment type="pathway">
    <text>Phospholipid metabolism; CDP-diacylglycerol degradation; phosphatidate from CDP-diacylglycerol: step 1/1.</text>
</comment>
<comment type="subcellular location">
    <subcellularLocation>
        <location evidence="2">Cell membrane</location>
        <topology evidence="2">Single-pass membrane protein</topology>
    </subcellularLocation>
</comment>
<comment type="similarity">
    <text evidence="2">Belongs to the Cdh family.</text>
</comment>
<name>CDH_MYCLE</name>
<dbReference type="EC" id="3.6.1.26"/>
<dbReference type="EMBL" id="AL583922">
    <property type="protein sequence ID" value="CAC30368.1"/>
    <property type="molecule type" value="Genomic_DNA"/>
</dbReference>
<dbReference type="PIR" id="C87086">
    <property type="entry name" value="C87086"/>
</dbReference>
<dbReference type="RefSeq" id="NP_302007.1">
    <property type="nucleotide sequence ID" value="NC_002677.1"/>
</dbReference>
<dbReference type="RefSeq" id="WP_010908328.1">
    <property type="nucleotide sequence ID" value="NC_002677.1"/>
</dbReference>
<dbReference type="SMR" id="Q9CC08"/>
<dbReference type="STRING" id="272631.gene:17575256"/>
<dbReference type="KEGG" id="mle:ML1417"/>
<dbReference type="PATRIC" id="fig|272631.5.peg.2627"/>
<dbReference type="Leproma" id="ML1417"/>
<dbReference type="eggNOG" id="COG2134">
    <property type="taxonomic scope" value="Bacteria"/>
</dbReference>
<dbReference type="HOGENOM" id="CLU_077117_0_0_11"/>
<dbReference type="OrthoDB" id="481399at2"/>
<dbReference type="UniPathway" id="UPA00609">
    <property type="reaction ID" value="UER00664"/>
</dbReference>
<dbReference type="Proteomes" id="UP000000806">
    <property type="component" value="Chromosome"/>
</dbReference>
<dbReference type="GO" id="GO:0005886">
    <property type="term" value="C:plasma membrane"/>
    <property type="evidence" value="ECO:0007669"/>
    <property type="project" value="UniProtKB-SubCell"/>
</dbReference>
<dbReference type="GO" id="GO:0008715">
    <property type="term" value="F:CDP-diacylglycerol diphosphatase activity"/>
    <property type="evidence" value="ECO:0007669"/>
    <property type="project" value="UniProtKB-UniRule"/>
</dbReference>
<dbReference type="GO" id="GO:0046342">
    <property type="term" value="P:CDP-diacylglycerol catabolic process"/>
    <property type="evidence" value="ECO:0007669"/>
    <property type="project" value="UniProtKB-UniRule"/>
</dbReference>
<dbReference type="GO" id="GO:0008654">
    <property type="term" value="P:phospholipid biosynthetic process"/>
    <property type="evidence" value="ECO:0007669"/>
    <property type="project" value="UniProtKB-KW"/>
</dbReference>
<dbReference type="Gene3D" id="3.30.428.30">
    <property type="entry name" value="HIT family - CDH-like"/>
    <property type="match status" value="1"/>
</dbReference>
<dbReference type="HAMAP" id="MF_00319">
    <property type="entry name" value="Cdh"/>
    <property type="match status" value="1"/>
</dbReference>
<dbReference type="InterPro" id="IPR003763">
    <property type="entry name" value="CDP-diacylglyc_Pase"/>
</dbReference>
<dbReference type="InterPro" id="IPR036265">
    <property type="entry name" value="HIT-like_sf"/>
</dbReference>
<dbReference type="NCBIfam" id="NF003982">
    <property type="entry name" value="PRK05471.1-1"/>
    <property type="match status" value="1"/>
</dbReference>
<dbReference type="Pfam" id="PF02611">
    <property type="entry name" value="CDH"/>
    <property type="match status" value="1"/>
</dbReference>
<dbReference type="PIRSF" id="PIRSF001273">
    <property type="entry name" value="CDH"/>
    <property type="match status" value="1"/>
</dbReference>
<dbReference type="SUPFAM" id="SSF54197">
    <property type="entry name" value="HIT-like"/>
    <property type="match status" value="1"/>
</dbReference>
<organism>
    <name type="scientific">Mycobacterium leprae (strain TN)</name>
    <dbReference type="NCBI Taxonomy" id="272631"/>
    <lineage>
        <taxon>Bacteria</taxon>
        <taxon>Bacillati</taxon>
        <taxon>Actinomycetota</taxon>
        <taxon>Actinomycetes</taxon>
        <taxon>Mycobacteriales</taxon>
        <taxon>Mycobacteriaceae</taxon>
        <taxon>Mycobacterium</taxon>
    </lineage>
</organism>